<accession>B0UTC6</accession>
<keyword id="KW-0131">Cell cycle</keyword>
<keyword id="KW-0132">Cell division</keyword>
<keyword id="KW-0133">Cell shape</keyword>
<keyword id="KW-0961">Cell wall biogenesis/degradation</keyword>
<keyword id="KW-0963">Cytoplasm</keyword>
<keyword id="KW-0326">Glycosidase</keyword>
<keyword id="KW-0378">Hydrolase</keyword>
<keyword id="KW-0573">Peptidoglycan synthesis</keyword>
<gene>
    <name evidence="1" type="primary">nagZ</name>
    <name type="ordered locus">HSM_1045</name>
</gene>
<comment type="function">
    <text evidence="1">Plays a role in peptidoglycan recycling by cleaving the terminal beta-1,4-linked N-acetylglucosamine (GlcNAc) from peptide-linked peptidoglycan fragments, giving rise to free GlcNAc, anhydro-N-acetylmuramic acid and anhydro-N-acetylmuramic acid-linked peptides.</text>
</comment>
<comment type="catalytic activity">
    <reaction evidence="1">
        <text>Hydrolysis of terminal non-reducing N-acetyl-D-hexosamine residues in N-acetyl-beta-D-hexosaminides.</text>
        <dbReference type="EC" id="3.2.1.52"/>
    </reaction>
</comment>
<comment type="pathway">
    <text evidence="1">Cell wall biogenesis; peptidoglycan recycling.</text>
</comment>
<comment type="subcellular location">
    <subcellularLocation>
        <location evidence="1">Cytoplasm</location>
    </subcellularLocation>
</comment>
<comment type="similarity">
    <text evidence="1">Belongs to the glycosyl hydrolase 3 family. NagZ subfamily.</text>
</comment>
<feature type="chain" id="PRO_1000079575" description="Beta-hexosaminidase">
    <location>
        <begin position="1"/>
        <end position="348"/>
    </location>
</feature>
<feature type="active site" description="Proton donor/acceptor" evidence="1">
    <location>
        <position position="177"/>
    </location>
</feature>
<feature type="active site" description="Nucleophile" evidence="1">
    <location>
        <position position="249"/>
    </location>
</feature>
<feature type="binding site" evidence="1">
    <location>
        <position position="62"/>
    </location>
    <ligand>
        <name>substrate</name>
    </ligand>
</feature>
<feature type="binding site" evidence="1">
    <location>
        <position position="70"/>
    </location>
    <ligand>
        <name>substrate</name>
    </ligand>
</feature>
<feature type="binding site" evidence="1">
    <location>
        <position position="134"/>
    </location>
    <ligand>
        <name>substrate</name>
    </ligand>
</feature>
<feature type="binding site" evidence="1">
    <location>
        <begin position="164"/>
        <end position="165"/>
    </location>
    <ligand>
        <name>substrate</name>
    </ligand>
</feature>
<feature type="site" description="Important for catalytic activity" evidence="1">
    <location>
        <position position="175"/>
    </location>
</feature>
<name>NAGZ_HISS2</name>
<sequence>MSILLIDLSGQELRQEEIELLEHPLVAGLILFSRNFYDIEQIRHLIRSVRQKVKKPLLITVDQEGGRVQRFRQGLTQLPAMQSFACLLSDPQEQQEMAWRAGWQMAAEMTALDIDLSFAPVLDLGHQCKAIGDRSFHYEEKKLIELAEKFIQGMRQIGMSATGKHFPGHGHVLADSHLETPYDDRAKELIFAQDIRPFQSLIKQGLLDAVMPAHVIYTQCDNQPASGSSYWLKEVLRQQLGFQGAIFSDDLGMKGAGFMGDFVARCTQSLQAGCDLLLLCNEPEAVVQVLDRFKPQESQNKRIIRQTRLNKLFKKQRIDWQTLRTQRDWLENHKKLTALQQDWLAYKG</sequence>
<dbReference type="EC" id="3.2.1.52" evidence="1"/>
<dbReference type="EMBL" id="CP000947">
    <property type="protein sequence ID" value="ACA30759.1"/>
    <property type="molecule type" value="Genomic_DNA"/>
</dbReference>
<dbReference type="RefSeq" id="WP_012340236.1">
    <property type="nucleotide sequence ID" value="NC_010519.1"/>
</dbReference>
<dbReference type="SMR" id="B0UTC6"/>
<dbReference type="STRING" id="228400.HSM_1045"/>
<dbReference type="CAZy" id="GH3">
    <property type="family name" value="Glycoside Hydrolase Family 3"/>
</dbReference>
<dbReference type="GeneID" id="31487344"/>
<dbReference type="KEGG" id="hsm:HSM_1045"/>
<dbReference type="HOGENOM" id="CLU_008392_0_0_6"/>
<dbReference type="UniPathway" id="UPA00544"/>
<dbReference type="GO" id="GO:0005737">
    <property type="term" value="C:cytoplasm"/>
    <property type="evidence" value="ECO:0007669"/>
    <property type="project" value="UniProtKB-SubCell"/>
</dbReference>
<dbReference type="GO" id="GO:0004563">
    <property type="term" value="F:beta-N-acetylhexosaminidase activity"/>
    <property type="evidence" value="ECO:0007669"/>
    <property type="project" value="UniProtKB-UniRule"/>
</dbReference>
<dbReference type="GO" id="GO:0005975">
    <property type="term" value="P:carbohydrate metabolic process"/>
    <property type="evidence" value="ECO:0007669"/>
    <property type="project" value="InterPro"/>
</dbReference>
<dbReference type="GO" id="GO:0051301">
    <property type="term" value="P:cell division"/>
    <property type="evidence" value="ECO:0007669"/>
    <property type="project" value="UniProtKB-KW"/>
</dbReference>
<dbReference type="GO" id="GO:0071555">
    <property type="term" value="P:cell wall organization"/>
    <property type="evidence" value="ECO:0007669"/>
    <property type="project" value="UniProtKB-KW"/>
</dbReference>
<dbReference type="GO" id="GO:0009252">
    <property type="term" value="P:peptidoglycan biosynthetic process"/>
    <property type="evidence" value="ECO:0007669"/>
    <property type="project" value="UniProtKB-KW"/>
</dbReference>
<dbReference type="GO" id="GO:0009254">
    <property type="term" value="P:peptidoglycan turnover"/>
    <property type="evidence" value="ECO:0007669"/>
    <property type="project" value="UniProtKB-UniRule"/>
</dbReference>
<dbReference type="GO" id="GO:0008360">
    <property type="term" value="P:regulation of cell shape"/>
    <property type="evidence" value="ECO:0007669"/>
    <property type="project" value="UniProtKB-KW"/>
</dbReference>
<dbReference type="FunFam" id="3.20.20.300:FF:000001">
    <property type="entry name" value="Beta-hexosaminidase"/>
    <property type="match status" value="1"/>
</dbReference>
<dbReference type="Gene3D" id="3.20.20.300">
    <property type="entry name" value="Glycoside hydrolase, family 3, N-terminal domain"/>
    <property type="match status" value="1"/>
</dbReference>
<dbReference type="HAMAP" id="MF_00364">
    <property type="entry name" value="NagZ"/>
    <property type="match status" value="1"/>
</dbReference>
<dbReference type="InterPro" id="IPR022956">
    <property type="entry name" value="Beta_hexosaminidase_bac"/>
</dbReference>
<dbReference type="InterPro" id="IPR001764">
    <property type="entry name" value="Glyco_hydro_3_N"/>
</dbReference>
<dbReference type="InterPro" id="IPR036962">
    <property type="entry name" value="Glyco_hydro_3_N_sf"/>
</dbReference>
<dbReference type="InterPro" id="IPR017853">
    <property type="entry name" value="Glycoside_hydrolase_SF"/>
</dbReference>
<dbReference type="InterPro" id="IPR050226">
    <property type="entry name" value="NagZ_Beta-hexosaminidase"/>
</dbReference>
<dbReference type="NCBIfam" id="NF003740">
    <property type="entry name" value="PRK05337.1"/>
    <property type="match status" value="1"/>
</dbReference>
<dbReference type="PANTHER" id="PTHR30480:SF13">
    <property type="entry name" value="BETA-HEXOSAMINIDASE"/>
    <property type="match status" value="1"/>
</dbReference>
<dbReference type="PANTHER" id="PTHR30480">
    <property type="entry name" value="BETA-HEXOSAMINIDASE-RELATED"/>
    <property type="match status" value="1"/>
</dbReference>
<dbReference type="Pfam" id="PF00933">
    <property type="entry name" value="Glyco_hydro_3"/>
    <property type="match status" value="1"/>
</dbReference>
<dbReference type="SUPFAM" id="SSF51445">
    <property type="entry name" value="(Trans)glycosidases"/>
    <property type="match status" value="1"/>
</dbReference>
<organism>
    <name type="scientific">Histophilus somni (strain 2336)</name>
    <name type="common">Haemophilus somnus</name>
    <dbReference type="NCBI Taxonomy" id="228400"/>
    <lineage>
        <taxon>Bacteria</taxon>
        <taxon>Pseudomonadati</taxon>
        <taxon>Pseudomonadota</taxon>
        <taxon>Gammaproteobacteria</taxon>
        <taxon>Pasteurellales</taxon>
        <taxon>Pasteurellaceae</taxon>
        <taxon>Histophilus</taxon>
    </lineage>
</organism>
<reference key="1">
    <citation type="submission" date="2008-02" db="EMBL/GenBank/DDBJ databases">
        <title>Complete sequence of Haemophilus somnus 2336.</title>
        <authorList>
            <consortium name="US DOE Joint Genome Institute"/>
            <person name="Siddaramappa S."/>
            <person name="Duncan A.J."/>
            <person name="Challacombe J.F."/>
            <person name="Rainey D."/>
            <person name="Gillaspy A.F."/>
            <person name="Carson M."/>
            <person name="Gipson J."/>
            <person name="Gipson M."/>
            <person name="Bruce D."/>
            <person name="Detter J.C."/>
            <person name="Han C.S."/>
            <person name="Land M."/>
            <person name="Tapia R."/>
            <person name="Thompson L.S."/>
            <person name="Orvis J."/>
            <person name="Zaitshik J."/>
            <person name="Barnes G."/>
            <person name="Brettin T.S."/>
            <person name="Dyer D.W."/>
            <person name="Inzana T.J."/>
        </authorList>
    </citation>
    <scope>NUCLEOTIDE SEQUENCE [LARGE SCALE GENOMIC DNA]</scope>
    <source>
        <strain>2336</strain>
    </source>
</reference>
<proteinExistence type="inferred from homology"/>
<protein>
    <recommendedName>
        <fullName evidence="1">Beta-hexosaminidase</fullName>
        <ecNumber evidence="1">3.2.1.52</ecNumber>
    </recommendedName>
    <alternativeName>
        <fullName evidence="1">Beta-N-acetylhexosaminidase</fullName>
    </alternativeName>
    <alternativeName>
        <fullName evidence="1">N-acetyl-beta-glucosaminidase</fullName>
    </alternativeName>
</protein>
<evidence type="ECO:0000255" key="1">
    <source>
        <dbReference type="HAMAP-Rule" id="MF_00364"/>
    </source>
</evidence>